<reference key="1">
    <citation type="journal article" date="2001" name="Lancet">
        <title>Whole genome sequencing of meticillin-resistant Staphylococcus aureus.</title>
        <authorList>
            <person name="Kuroda M."/>
            <person name="Ohta T."/>
            <person name="Uchiyama I."/>
            <person name="Baba T."/>
            <person name="Yuzawa H."/>
            <person name="Kobayashi I."/>
            <person name="Cui L."/>
            <person name="Oguchi A."/>
            <person name="Aoki K."/>
            <person name="Nagai Y."/>
            <person name="Lian J.-Q."/>
            <person name="Ito T."/>
            <person name="Kanamori M."/>
            <person name="Matsumaru H."/>
            <person name="Maruyama A."/>
            <person name="Murakami H."/>
            <person name="Hosoyama A."/>
            <person name="Mizutani-Ui Y."/>
            <person name="Takahashi N.K."/>
            <person name="Sawano T."/>
            <person name="Inoue R."/>
            <person name="Kaito C."/>
            <person name="Sekimizu K."/>
            <person name="Hirakawa H."/>
            <person name="Kuhara S."/>
            <person name="Goto S."/>
            <person name="Yabuzaki J."/>
            <person name="Kanehisa M."/>
            <person name="Yamashita A."/>
            <person name="Oshima K."/>
            <person name="Furuya K."/>
            <person name="Yoshino C."/>
            <person name="Shiba T."/>
            <person name="Hattori M."/>
            <person name="Ogasawara N."/>
            <person name="Hayashi H."/>
            <person name="Hiramatsu K."/>
        </authorList>
    </citation>
    <scope>NUCLEOTIDE SEQUENCE [LARGE SCALE GENOMIC DNA]</scope>
    <source>
        <strain>N315</strain>
    </source>
</reference>
<reference key="2">
    <citation type="submission" date="2007-10" db="UniProtKB">
        <title>Shotgun proteomic analysis of total and membrane protein extracts of S. aureus strain N315.</title>
        <authorList>
            <person name="Vaezzadeh A.R."/>
            <person name="Deshusses J."/>
            <person name="Lescuyer P."/>
            <person name="Hochstrasser D.F."/>
        </authorList>
    </citation>
    <scope>IDENTIFICATION BY MASS SPECTROMETRY [LARGE SCALE ANALYSIS]</scope>
    <source>
        <strain>N315</strain>
    </source>
</reference>
<dbReference type="EC" id="6.1.1.4" evidence="1"/>
<dbReference type="EMBL" id="BA000018">
    <property type="protein sequence ID" value="BAB42847.1"/>
    <property type="molecule type" value="Genomic_DNA"/>
</dbReference>
<dbReference type="PIR" id="B89961">
    <property type="entry name" value="B89961"/>
</dbReference>
<dbReference type="SMR" id="P67513"/>
<dbReference type="EnsemblBacteria" id="BAB42847">
    <property type="protein sequence ID" value="BAB42847"/>
    <property type="gene ID" value="BAB42847"/>
</dbReference>
<dbReference type="KEGG" id="sau:SA1579"/>
<dbReference type="HOGENOM" id="CLU_004427_0_0_9"/>
<dbReference type="GO" id="GO:0005829">
    <property type="term" value="C:cytosol"/>
    <property type="evidence" value="ECO:0007669"/>
    <property type="project" value="TreeGrafter"/>
</dbReference>
<dbReference type="GO" id="GO:0002161">
    <property type="term" value="F:aminoacyl-tRNA deacylase activity"/>
    <property type="evidence" value="ECO:0007669"/>
    <property type="project" value="InterPro"/>
</dbReference>
<dbReference type="GO" id="GO:0005524">
    <property type="term" value="F:ATP binding"/>
    <property type="evidence" value="ECO:0007669"/>
    <property type="project" value="UniProtKB-UniRule"/>
</dbReference>
<dbReference type="GO" id="GO:0004823">
    <property type="term" value="F:leucine-tRNA ligase activity"/>
    <property type="evidence" value="ECO:0007669"/>
    <property type="project" value="UniProtKB-UniRule"/>
</dbReference>
<dbReference type="GO" id="GO:0006429">
    <property type="term" value="P:leucyl-tRNA aminoacylation"/>
    <property type="evidence" value="ECO:0007669"/>
    <property type="project" value="UniProtKB-UniRule"/>
</dbReference>
<dbReference type="CDD" id="cd07958">
    <property type="entry name" value="Anticodon_Ia_Leu_BEm"/>
    <property type="match status" value="1"/>
</dbReference>
<dbReference type="CDD" id="cd00812">
    <property type="entry name" value="LeuRS_core"/>
    <property type="match status" value="1"/>
</dbReference>
<dbReference type="FunFam" id="1.10.730.10:FF:000012">
    <property type="entry name" value="Leucine--tRNA ligase"/>
    <property type="match status" value="1"/>
</dbReference>
<dbReference type="FunFam" id="1.10.730.10:FF:000018">
    <property type="entry name" value="Leucine--tRNA ligase"/>
    <property type="match status" value="1"/>
</dbReference>
<dbReference type="FunFam" id="3.10.20.590:FF:000001">
    <property type="entry name" value="Leucine--tRNA ligase"/>
    <property type="match status" value="1"/>
</dbReference>
<dbReference type="FunFam" id="3.40.50.620:FF:000056">
    <property type="entry name" value="Leucine--tRNA ligase"/>
    <property type="match status" value="1"/>
</dbReference>
<dbReference type="FunFam" id="3.40.50.620:FF:000077">
    <property type="entry name" value="Leucine--tRNA ligase"/>
    <property type="match status" value="1"/>
</dbReference>
<dbReference type="Gene3D" id="3.10.20.590">
    <property type="match status" value="1"/>
</dbReference>
<dbReference type="Gene3D" id="3.40.50.620">
    <property type="entry name" value="HUPs"/>
    <property type="match status" value="2"/>
</dbReference>
<dbReference type="Gene3D" id="1.10.730.10">
    <property type="entry name" value="Isoleucyl-tRNA Synthetase, Domain 1"/>
    <property type="match status" value="1"/>
</dbReference>
<dbReference type="HAMAP" id="MF_00049_B">
    <property type="entry name" value="Leu_tRNA_synth_B"/>
    <property type="match status" value="1"/>
</dbReference>
<dbReference type="InterPro" id="IPR001412">
    <property type="entry name" value="aa-tRNA-synth_I_CS"/>
</dbReference>
<dbReference type="InterPro" id="IPR002300">
    <property type="entry name" value="aa-tRNA-synth_Ia"/>
</dbReference>
<dbReference type="InterPro" id="IPR002302">
    <property type="entry name" value="Leu-tRNA-ligase"/>
</dbReference>
<dbReference type="InterPro" id="IPR025709">
    <property type="entry name" value="Leu_tRNA-synth_edit"/>
</dbReference>
<dbReference type="InterPro" id="IPR013155">
    <property type="entry name" value="M/V/L/I-tRNA-synth_anticd-bd"/>
</dbReference>
<dbReference type="InterPro" id="IPR015413">
    <property type="entry name" value="Methionyl/Leucyl_tRNA_Synth"/>
</dbReference>
<dbReference type="InterPro" id="IPR014729">
    <property type="entry name" value="Rossmann-like_a/b/a_fold"/>
</dbReference>
<dbReference type="InterPro" id="IPR009080">
    <property type="entry name" value="tRNAsynth_Ia_anticodon-bd"/>
</dbReference>
<dbReference type="InterPro" id="IPR009008">
    <property type="entry name" value="Val/Leu/Ile-tRNA-synth_edit"/>
</dbReference>
<dbReference type="NCBIfam" id="TIGR00396">
    <property type="entry name" value="leuS_bact"/>
    <property type="match status" value="1"/>
</dbReference>
<dbReference type="PANTHER" id="PTHR43740:SF2">
    <property type="entry name" value="LEUCINE--TRNA LIGASE, MITOCHONDRIAL"/>
    <property type="match status" value="1"/>
</dbReference>
<dbReference type="PANTHER" id="PTHR43740">
    <property type="entry name" value="LEUCYL-TRNA SYNTHETASE"/>
    <property type="match status" value="1"/>
</dbReference>
<dbReference type="Pfam" id="PF08264">
    <property type="entry name" value="Anticodon_1"/>
    <property type="match status" value="1"/>
</dbReference>
<dbReference type="Pfam" id="PF00133">
    <property type="entry name" value="tRNA-synt_1"/>
    <property type="match status" value="1"/>
</dbReference>
<dbReference type="Pfam" id="PF13603">
    <property type="entry name" value="tRNA-synt_1_2"/>
    <property type="match status" value="1"/>
</dbReference>
<dbReference type="Pfam" id="PF09334">
    <property type="entry name" value="tRNA-synt_1g"/>
    <property type="match status" value="1"/>
</dbReference>
<dbReference type="PRINTS" id="PR00985">
    <property type="entry name" value="TRNASYNTHLEU"/>
</dbReference>
<dbReference type="SUPFAM" id="SSF47323">
    <property type="entry name" value="Anticodon-binding domain of a subclass of class I aminoacyl-tRNA synthetases"/>
    <property type="match status" value="1"/>
</dbReference>
<dbReference type="SUPFAM" id="SSF52374">
    <property type="entry name" value="Nucleotidylyl transferase"/>
    <property type="match status" value="1"/>
</dbReference>
<dbReference type="SUPFAM" id="SSF50677">
    <property type="entry name" value="ValRS/IleRS/LeuRS editing domain"/>
    <property type="match status" value="1"/>
</dbReference>
<dbReference type="PROSITE" id="PS00178">
    <property type="entry name" value="AA_TRNA_LIGASE_I"/>
    <property type="match status" value="1"/>
</dbReference>
<organism>
    <name type="scientific">Staphylococcus aureus (strain N315)</name>
    <dbReference type="NCBI Taxonomy" id="158879"/>
    <lineage>
        <taxon>Bacteria</taxon>
        <taxon>Bacillati</taxon>
        <taxon>Bacillota</taxon>
        <taxon>Bacilli</taxon>
        <taxon>Bacillales</taxon>
        <taxon>Staphylococcaceae</taxon>
        <taxon>Staphylococcus</taxon>
    </lineage>
</organism>
<keyword id="KW-0030">Aminoacyl-tRNA synthetase</keyword>
<keyword id="KW-0067">ATP-binding</keyword>
<keyword id="KW-0963">Cytoplasm</keyword>
<keyword id="KW-0436">Ligase</keyword>
<keyword id="KW-0547">Nucleotide-binding</keyword>
<keyword id="KW-0648">Protein biosynthesis</keyword>
<evidence type="ECO:0000255" key="1">
    <source>
        <dbReference type="HAMAP-Rule" id="MF_00049"/>
    </source>
</evidence>
<comment type="catalytic activity">
    <reaction evidence="1">
        <text>tRNA(Leu) + L-leucine + ATP = L-leucyl-tRNA(Leu) + AMP + diphosphate</text>
        <dbReference type="Rhea" id="RHEA:11688"/>
        <dbReference type="Rhea" id="RHEA-COMP:9613"/>
        <dbReference type="Rhea" id="RHEA-COMP:9622"/>
        <dbReference type="ChEBI" id="CHEBI:30616"/>
        <dbReference type="ChEBI" id="CHEBI:33019"/>
        <dbReference type="ChEBI" id="CHEBI:57427"/>
        <dbReference type="ChEBI" id="CHEBI:78442"/>
        <dbReference type="ChEBI" id="CHEBI:78494"/>
        <dbReference type="ChEBI" id="CHEBI:456215"/>
        <dbReference type="EC" id="6.1.1.4"/>
    </reaction>
</comment>
<comment type="subcellular location">
    <subcellularLocation>
        <location evidence="1">Cytoplasm</location>
    </subcellularLocation>
</comment>
<comment type="similarity">
    <text evidence="1">Belongs to the class-I aminoacyl-tRNA synthetase family.</text>
</comment>
<gene>
    <name evidence="1" type="primary">leuS</name>
    <name type="ordered locus">SA1579</name>
</gene>
<protein>
    <recommendedName>
        <fullName evidence="1">Leucine--tRNA ligase</fullName>
        <ecNumber evidence="1">6.1.1.4</ecNumber>
    </recommendedName>
    <alternativeName>
        <fullName evidence="1">Leucyl-tRNA synthetase</fullName>
        <shortName evidence="1">LeuRS</shortName>
    </alternativeName>
</protein>
<name>SYL_STAAN</name>
<sequence length="804" mass="91671">MNYNHNQIEKKWQDYWDENKTFKTNDNLGQKKFYALDMFPYPSGAGLHVGHPEGYTATDIISRYKRMQGYNVLHPMGWDAFGLPAEQYALDTGNDPREFTKKNIQTFKRQIKELGFSYDWDREVNTTDPEYYKWTQWIFIQLYNKGLAYVDEVAVNWCPALGTVLSNEEVIDGVSERGGHPVYRKPMKQWVLKITEYADQLLADLDDLDWPESLKDMQRNWIGRSEGAKVSFDVDNTEGKVEVFTTRPDTIYGASFLVLSPEHALVNSITTDEYKEKVKAYQTEASKKSDLERTDLAKDKSGVFTGAYAINPLSGEKVQIWIADYVLSTYGTGAIMAVPAHDDRDYEFAKKFDLPIIEVIEGGNVEEAAYTGEGKHINSGELDGLENEAAITKAIQLLEQKGAGEKKVNYKLRDWLFSRQRYWGEPIPVIHWEDGTMTTVPEEELPLLLPETDEIKPSGTGESPLANIDSFVNVVDEKTGMKGRRETNTMPQWAGSCWYYLRYIDPKNENMLADPEKLKHWLPVDLYIGGVEHAVLHLLYARFWHKVLYDLGIVPTKEPFQKLFNQGMILGEGNEKMSKSKGNVINPDDIVQSHGADTLRLYEMFMGPLDAAIAWSEKGLDGSRRFLDRVWRLMVNEDGTLSSKIVTTNNKSLDKVYNQTVKKVTEDFETLGFNTAISQLMVFINECYKVDEVYKPYIEGFVKMLAPIAPHIGEELWSKLGHEESITYQPWPTYDEALLVDDEVEIVVQVNGKLRAKIKIAKDTSKEEMQEIALSNDNVKASIEGKDIMKVIAVPQKLVNIVAK</sequence>
<feature type="chain" id="PRO_0000152084" description="Leucine--tRNA ligase">
    <location>
        <begin position="1"/>
        <end position="804"/>
    </location>
</feature>
<feature type="short sequence motif" description="'HIGH' region">
    <location>
        <begin position="40"/>
        <end position="51"/>
    </location>
</feature>
<feature type="short sequence motif" description="'KMSKS' region">
    <location>
        <begin position="576"/>
        <end position="580"/>
    </location>
</feature>
<feature type="binding site" evidence="1">
    <location>
        <position position="579"/>
    </location>
    <ligand>
        <name>ATP</name>
        <dbReference type="ChEBI" id="CHEBI:30616"/>
    </ligand>
</feature>
<proteinExistence type="evidence at protein level"/>
<accession>P67513</accession>
<accession>Q99TA8</accession>